<gene>
    <name type="primary">RPS4</name>
</gene>
<dbReference type="EMBL" id="BC102476">
    <property type="protein sequence ID" value="AAI02477.1"/>
    <property type="molecule type" value="mRNA"/>
</dbReference>
<dbReference type="EMBL" id="BC141995">
    <property type="protein sequence ID" value="AAI41996.1"/>
    <property type="molecule type" value="mRNA"/>
</dbReference>
<dbReference type="EMBL" id="D50107">
    <property type="protein sequence ID" value="BAA21078.1"/>
    <property type="molecule type" value="mRNA"/>
</dbReference>
<dbReference type="RefSeq" id="NP_001030522.1">
    <property type="nucleotide sequence ID" value="NM_001035445.2"/>
</dbReference>
<dbReference type="SMR" id="P79103"/>
<dbReference type="FunCoup" id="P79103">
    <property type="interactions" value="2467"/>
</dbReference>
<dbReference type="STRING" id="9913.ENSBTAP00000025024"/>
<dbReference type="PaxDb" id="9913-ENSBTAP00000025024"/>
<dbReference type="PeptideAtlas" id="P79103"/>
<dbReference type="Ensembl" id="ENSBTAT00000025024.6">
    <property type="protein sequence ID" value="ENSBTAP00000025024.4"/>
    <property type="gene ID" value="ENSBTAG00000018800.6"/>
</dbReference>
<dbReference type="GeneID" id="614241"/>
<dbReference type="KEGG" id="bta:614241"/>
<dbReference type="CTD" id="6191"/>
<dbReference type="VEuPathDB" id="HostDB:ENSBTAG00000018800"/>
<dbReference type="eggNOG" id="KOG0378">
    <property type="taxonomic scope" value="Eukaryota"/>
</dbReference>
<dbReference type="GeneTree" id="ENSGT00390000005569"/>
<dbReference type="HOGENOM" id="CLU_060400_1_0_1"/>
<dbReference type="InParanoid" id="P79103"/>
<dbReference type="OMA" id="GHIQLNL"/>
<dbReference type="OrthoDB" id="9669156at2759"/>
<dbReference type="TreeFam" id="TF300612"/>
<dbReference type="Reactome" id="R-BTA-156827">
    <property type="pathway name" value="L13a-mediated translational silencing of Ceruloplasmin expression"/>
</dbReference>
<dbReference type="Reactome" id="R-BTA-1799339">
    <property type="pathway name" value="SRP-dependent cotranslational protein targeting to membrane"/>
</dbReference>
<dbReference type="Reactome" id="R-BTA-6791226">
    <property type="pathway name" value="Major pathway of rRNA processing in the nucleolus and cytosol"/>
</dbReference>
<dbReference type="Reactome" id="R-BTA-72649">
    <property type="pathway name" value="Translation initiation complex formation"/>
</dbReference>
<dbReference type="Reactome" id="R-BTA-72689">
    <property type="pathway name" value="Formation of a pool of free 40S subunits"/>
</dbReference>
<dbReference type="Reactome" id="R-BTA-72695">
    <property type="pathway name" value="Formation of the ternary complex, and subsequently, the 43S complex"/>
</dbReference>
<dbReference type="Reactome" id="R-BTA-72702">
    <property type="pathway name" value="Ribosomal scanning and start codon recognition"/>
</dbReference>
<dbReference type="Reactome" id="R-BTA-72706">
    <property type="pathway name" value="GTP hydrolysis and joining of the 60S ribosomal subunit"/>
</dbReference>
<dbReference type="Reactome" id="R-BTA-975956">
    <property type="pathway name" value="Nonsense Mediated Decay (NMD) independent of the Exon Junction Complex (EJC)"/>
</dbReference>
<dbReference type="Reactome" id="R-BTA-975957">
    <property type="pathway name" value="Nonsense Mediated Decay (NMD) enhanced by the Exon Junction Complex (EJC)"/>
</dbReference>
<dbReference type="Proteomes" id="UP000009136">
    <property type="component" value="Chromosome X"/>
</dbReference>
<dbReference type="Bgee" id="ENSBTAG00000018800">
    <property type="expression patterns" value="Expressed in adenohypophysis and 105 other cell types or tissues"/>
</dbReference>
<dbReference type="GO" id="GO:0022627">
    <property type="term" value="C:cytosolic small ribosomal subunit"/>
    <property type="evidence" value="ECO:0000318"/>
    <property type="project" value="GO_Central"/>
</dbReference>
<dbReference type="GO" id="GO:0003723">
    <property type="term" value="F:RNA binding"/>
    <property type="evidence" value="ECO:0000318"/>
    <property type="project" value="GO_Central"/>
</dbReference>
<dbReference type="GO" id="GO:0019843">
    <property type="term" value="F:rRNA binding"/>
    <property type="evidence" value="ECO:0007669"/>
    <property type="project" value="UniProtKB-KW"/>
</dbReference>
<dbReference type="GO" id="GO:0003735">
    <property type="term" value="F:structural constituent of ribosome"/>
    <property type="evidence" value="ECO:0000318"/>
    <property type="project" value="GO_Central"/>
</dbReference>
<dbReference type="GO" id="GO:0006412">
    <property type="term" value="P:translation"/>
    <property type="evidence" value="ECO:0000318"/>
    <property type="project" value="GO_Central"/>
</dbReference>
<dbReference type="CDD" id="cd06087">
    <property type="entry name" value="KOW_RPS4"/>
    <property type="match status" value="1"/>
</dbReference>
<dbReference type="CDD" id="cd00165">
    <property type="entry name" value="S4"/>
    <property type="match status" value="1"/>
</dbReference>
<dbReference type="FunFam" id="2.30.30.30:FF:000005">
    <property type="entry name" value="40S ribosomal protein S4"/>
    <property type="match status" value="1"/>
</dbReference>
<dbReference type="FunFam" id="2.40.50.740:FF:000001">
    <property type="entry name" value="40S ribosomal protein S4"/>
    <property type="match status" value="1"/>
</dbReference>
<dbReference type="FunFam" id="3.10.290.10:FF:000051">
    <property type="entry name" value="40S ribosomal protein S4, X isoform"/>
    <property type="match status" value="1"/>
</dbReference>
<dbReference type="Gene3D" id="2.30.30.30">
    <property type="match status" value="1"/>
</dbReference>
<dbReference type="Gene3D" id="2.40.50.740">
    <property type="match status" value="1"/>
</dbReference>
<dbReference type="Gene3D" id="3.10.290.10">
    <property type="entry name" value="RNA-binding S4 domain"/>
    <property type="match status" value="1"/>
</dbReference>
<dbReference type="HAMAP" id="MF_00485">
    <property type="entry name" value="Ribosomal_eS4"/>
    <property type="match status" value="1"/>
</dbReference>
<dbReference type="InterPro" id="IPR005824">
    <property type="entry name" value="KOW"/>
</dbReference>
<dbReference type="InterPro" id="IPR014722">
    <property type="entry name" value="Rib_uL2_dom2"/>
</dbReference>
<dbReference type="InterPro" id="IPR000876">
    <property type="entry name" value="Ribosomal_eS4"/>
</dbReference>
<dbReference type="InterPro" id="IPR032277">
    <property type="entry name" value="Ribosomal_eS4_C"/>
</dbReference>
<dbReference type="InterPro" id="IPR013845">
    <property type="entry name" value="Ribosomal_eS4_central_region"/>
</dbReference>
<dbReference type="InterPro" id="IPR038237">
    <property type="entry name" value="Ribosomal_eS4_central_sf"/>
</dbReference>
<dbReference type="InterPro" id="IPR041982">
    <property type="entry name" value="Ribosomal_eS4_KOW"/>
</dbReference>
<dbReference type="InterPro" id="IPR013843">
    <property type="entry name" value="Ribosomal_eS4_N"/>
</dbReference>
<dbReference type="InterPro" id="IPR018199">
    <property type="entry name" value="Ribosomal_eS4_N_CS"/>
</dbReference>
<dbReference type="InterPro" id="IPR002942">
    <property type="entry name" value="S4_RNA-bd"/>
</dbReference>
<dbReference type="InterPro" id="IPR036986">
    <property type="entry name" value="S4_RNA-bd_sf"/>
</dbReference>
<dbReference type="PANTHER" id="PTHR11581">
    <property type="entry name" value="30S/40S RIBOSOMAL PROTEIN S4"/>
    <property type="match status" value="1"/>
</dbReference>
<dbReference type="PANTHER" id="PTHR11581:SF0">
    <property type="entry name" value="SMALL RIBOSOMAL SUBUNIT PROTEIN ES4"/>
    <property type="match status" value="1"/>
</dbReference>
<dbReference type="Pfam" id="PF16121">
    <property type="entry name" value="40S_S4_C"/>
    <property type="match status" value="1"/>
</dbReference>
<dbReference type="Pfam" id="PF00467">
    <property type="entry name" value="KOW"/>
    <property type="match status" value="1"/>
</dbReference>
<dbReference type="Pfam" id="PF00900">
    <property type="entry name" value="Ribosomal_S4e"/>
    <property type="match status" value="1"/>
</dbReference>
<dbReference type="Pfam" id="PF08071">
    <property type="entry name" value="RS4NT"/>
    <property type="match status" value="1"/>
</dbReference>
<dbReference type="PIRSF" id="PIRSF002116">
    <property type="entry name" value="Ribosomal_S4"/>
    <property type="match status" value="1"/>
</dbReference>
<dbReference type="SMART" id="SM00363">
    <property type="entry name" value="S4"/>
    <property type="match status" value="1"/>
</dbReference>
<dbReference type="PROSITE" id="PS00528">
    <property type="entry name" value="RIBOSOMAL_S4E"/>
    <property type="match status" value="1"/>
</dbReference>
<dbReference type="PROSITE" id="PS50889">
    <property type="entry name" value="S4"/>
    <property type="match status" value="1"/>
</dbReference>
<name>RS4_BOVIN</name>
<accession>P79103</accession>
<accession>A5PJ76</accession>
<accession>Q3T0A5</accession>
<sequence length="263" mass="29598">MARGPKKHLKRVAAPKHWMLDKLTGVFAPRPSTGPHKLRECLPLIIFLRNRLKYALTGDEVKKICMQRFIKIDGKVRTDITYPAGFMDVISIDKTGENFRLIYDTKGRFAVHRITPEEAKYKLCKVRKIFVGTKGIPHLVTHDARTIRYPDPLIKVNDTIQIDLETGKITDFIKFDTGNLCMVTGGANLGRIGVITNRERHPGSFDVVHVKDANGNSFATRLSNIFVIGKGNKPWISLPRGKGIRLTIAEERDKRLAAKQSSG</sequence>
<reference key="1">
    <citation type="submission" date="2007-06" db="EMBL/GenBank/DDBJ databases">
        <authorList>
            <consortium name="NIH - Mammalian Gene Collection (MGC) project"/>
        </authorList>
    </citation>
    <scope>NUCLEOTIDE SEQUENCE [LARGE SCALE MRNA]</scope>
    <source>
        <strain>Crossbred X Angus</strain>
        <strain>Hereford</strain>
        <tissue>Hypothalamus</tissue>
        <tissue>Ileum</tissue>
    </source>
</reference>
<reference key="2">
    <citation type="journal article" date="1996" name="Genomics">
        <title>Relationship between the monosomy X phenotype and Y-linked ribosomal protein S4 (Rps4) in several species of mammals: a molecular evolutionary analysis of Rps4 homologs.</title>
        <authorList>
            <person name="Omoe K."/>
            <person name="Endo A."/>
        </authorList>
    </citation>
    <scope>NUCLEOTIDE SEQUENCE [MRNA] OF 20-213</scope>
    <source>
        <tissue>Blood</tissue>
    </source>
</reference>
<comment type="similarity">
    <text evidence="1">Belongs to the eukaryotic ribosomal protein eS4 family.</text>
</comment>
<evidence type="ECO:0000305" key="1"/>
<feature type="chain" id="PRO_0000130820" description="Small ribosomal subunit protein eS4">
    <location>
        <begin position="1"/>
        <end position="263"/>
    </location>
</feature>
<feature type="domain" description="S4 RNA-binding">
    <location>
        <begin position="42"/>
        <end position="104"/>
    </location>
</feature>
<feature type="sequence conflict" description="In Ref. 2; BAA21078." evidence="1" ref="2">
    <original>I</original>
    <variation>V</variation>
    <location>
        <position position="80"/>
    </location>
</feature>
<feature type="sequence conflict" description="In Ref. 2; BAA21078." evidence="1" ref="2">
    <original>T</original>
    <variation>I</variation>
    <location>
        <position position="95"/>
    </location>
</feature>
<proteinExistence type="evidence at transcript level"/>
<keyword id="KW-1185">Reference proteome</keyword>
<keyword id="KW-0687">Ribonucleoprotein</keyword>
<keyword id="KW-0689">Ribosomal protein</keyword>
<keyword id="KW-0694">RNA-binding</keyword>
<keyword id="KW-0699">rRNA-binding</keyword>
<protein>
    <recommendedName>
        <fullName evidence="1">Small ribosomal subunit protein eS4</fullName>
    </recommendedName>
    <alternativeName>
        <fullName>40S ribosomal protein S4</fullName>
    </alternativeName>
</protein>
<organism>
    <name type="scientific">Bos taurus</name>
    <name type="common">Bovine</name>
    <dbReference type="NCBI Taxonomy" id="9913"/>
    <lineage>
        <taxon>Eukaryota</taxon>
        <taxon>Metazoa</taxon>
        <taxon>Chordata</taxon>
        <taxon>Craniata</taxon>
        <taxon>Vertebrata</taxon>
        <taxon>Euteleostomi</taxon>
        <taxon>Mammalia</taxon>
        <taxon>Eutheria</taxon>
        <taxon>Laurasiatheria</taxon>
        <taxon>Artiodactyla</taxon>
        <taxon>Ruminantia</taxon>
        <taxon>Pecora</taxon>
        <taxon>Bovidae</taxon>
        <taxon>Bovinae</taxon>
        <taxon>Bos</taxon>
    </lineage>
</organism>